<proteinExistence type="evidence at protein level"/>
<comment type="function">
    <text>Does not appear to have detectable kinase activity.</text>
</comment>
<comment type="cofactor">
    <cofactor evidence="1">
        <name>Ca(2+)</name>
        <dbReference type="ChEBI" id="CHEBI:29108"/>
    </cofactor>
</comment>
<comment type="subunit">
    <text evidence="1">Interacts with calmodulin, in the presence of calcium.</text>
</comment>
<comment type="subcellular location">
    <subcellularLocation>
        <location evidence="1">Cell membrane</location>
        <topology evidence="1">Peripheral membrane protein</topology>
    </subcellularLocation>
    <subcellularLocation>
        <location evidence="1">Cytoplasmic vesicle membrane</location>
        <topology evidence="1">Peripheral membrane protein</topology>
    </subcellularLocation>
    <text evidence="1">Predominantly observed in association with the plasma membrane of soma and in neurites, both axons and dendrites. May be associated with vesicular structures (By similarity).</text>
</comment>
<comment type="domain">
    <text>The protein kinase domain is predicted to be catalytically inactive.</text>
</comment>
<comment type="similarity">
    <text evidence="5">Belongs to the protein kinase superfamily. CAMK Ser/Thr protein kinase family.</text>
</comment>
<sequence length="512" mass="54819">MPFGCVTLGDKKNYNQPSEVTDRYDLGQVIKTEEFCEIFRAKDKTTGKLHTCKKFQKRDGRKVRKAAKNEIGILKMVKHPNILQLVDVFVTRKEYFIFLELATGREVFDWILDQGYYSERDTSNVVRQVLEAVAYLHSLKIVHRNLKLENLVYYNRLKNSKIVISDFHLAKLENGLIKEPCGTPEYLAPEVVGRQRYGRPVDCWAIGVIMYILLSGNPPFYEEVEEDDYENHDKNLFRKILAGDYEFDSPYWDDISQAAKDLVTRLMEVEQDQRITAEEAISHEWISGNAASDKNIKDGVCAQIEKNFARAKWKKAVRVTTLMKRLRAPEQSGTAATQSASDAATPGAAGGAIAAAAAAAAAGGAASASGASATAATEGGAGCAAKSDDIASADRSATPATDGSATPATDGSVTPATDGSITPATDGSVTPATDRSATPATDGRATPATEESTVPATQSSALPAAKAAATPEPAVAQPDSTALEGATGQAPPSSKGEEATGCAQESQRVETS</sequence>
<evidence type="ECO:0000250" key="1"/>
<evidence type="ECO:0000250" key="2">
    <source>
        <dbReference type="UniProtKB" id="Q63092"/>
    </source>
</evidence>
<evidence type="ECO:0000255" key="3">
    <source>
        <dbReference type="PROSITE-ProRule" id="PRU00159"/>
    </source>
</evidence>
<evidence type="ECO:0000256" key="4">
    <source>
        <dbReference type="SAM" id="MobiDB-lite"/>
    </source>
</evidence>
<evidence type="ECO:0000305" key="5"/>
<evidence type="ECO:0007744" key="6">
    <source>
    </source>
</evidence>
<evidence type="ECO:0007744" key="7">
    <source>
    </source>
</evidence>
<keyword id="KW-0112">Calmodulin-binding</keyword>
<keyword id="KW-1003">Cell membrane</keyword>
<keyword id="KW-0968">Cytoplasmic vesicle</keyword>
<keyword id="KW-0472">Membrane</keyword>
<keyword id="KW-0597">Phosphoprotein</keyword>
<keyword id="KW-1185">Reference proteome</keyword>
<protein>
    <recommendedName>
        <fullName>CaM kinase-like vesicle-associated protein</fullName>
    </recommendedName>
</protein>
<name>CAMKV_MOUSE</name>
<reference key="1">
    <citation type="journal article" date="2005" name="Science">
        <title>The transcriptional landscape of the mammalian genome.</title>
        <authorList>
            <person name="Carninci P."/>
            <person name="Kasukawa T."/>
            <person name="Katayama S."/>
            <person name="Gough J."/>
            <person name="Frith M.C."/>
            <person name="Maeda N."/>
            <person name="Oyama R."/>
            <person name="Ravasi T."/>
            <person name="Lenhard B."/>
            <person name="Wells C."/>
            <person name="Kodzius R."/>
            <person name="Shimokawa K."/>
            <person name="Bajic V.B."/>
            <person name="Brenner S.E."/>
            <person name="Batalov S."/>
            <person name="Forrest A.R."/>
            <person name="Zavolan M."/>
            <person name="Davis M.J."/>
            <person name="Wilming L.G."/>
            <person name="Aidinis V."/>
            <person name="Allen J.E."/>
            <person name="Ambesi-Impiombato A."/>
            <person name="Apweiler R."/>
            <person name="Aturaliya R.N."/>
            <person name="Bailey T.L."/>
            <person name="Bansal M."/>
            <person name="Baxter L."/>
            <person name="Beisel K.W."/>
            <person name="Bersano T."/>
            <person name="Bono H."/>
            <person name="Chalk A.M."/>
            <person name="Chiu K.P."/>
            <person name="Choudhary V."/>
            <person name="Christoffels A."/>
            <person name="Clutterbuck D.R."/>
            <person name="Crowe M.L."/>
            <person name="Dalla E."/>
            <person name="Dalrymple B.P."/>
            <person name="de Bono B."/>
            <person name="Della Gatta G."/>
            <person name="di Bernardo D."/>
            <person name="Down T."/>
            <person name="Engstrom P."/>
            <person name="Fagiolini M."/>
            <person name="Faulkner G."/>
            <person name="Fletcher C.F."/>
            <person name="Fukushima T."/>
            <person name="Furuno M."/>
            <person name="Futaki S."/>
            <person name="Gariboldi M."/>
            <person name="Georgii-Hemming P."/>
            <person name="Gingeras T.R."/>
            <person name="Gojobori T."/>
            <person name="Green R.E."/>
            <person name="Gustincich S."/>
            <person name="Harbers M."/>
            <person name="Hayashi Y."/>
            <person name="Hensch T.K."/>
            <person name="Hirokawa N."/>
            <person name="Hill D."/>
            <person name="Huminiecki L."/>
            <person name="Iacono M."/>
            <person name="Ikeo K."/>
            <person name="Iwama A."/>
            <person name="Ishikawa T."/>
            <person name="Jakt M."/>
            <person name="Kanapin A."/>
            <person name="Katoh M."/>
            <person name="Kawasawa Y."/>
            <person name="Kelso J."/>
            <person name="Kitamura H."/>
            <person name="Kitano H."/>
            <person name="Kollias G."/>
            <person name="Krishnan S.P."/>
            <person name="Kruger A."/>
            <person name="Kummerfeld S.K."/>
            <person name="Kurochkin I.V."/>
            <person name="Lareau L.F."/>
            <person name="Lazarevic D."/>
            <person name="Lipovich L."/>
            <person name="Liu J."/>
            <person name="Liuni S."/>
            <person name="McWilliam S."/>
            <person name="Madan Babu M."/>
            <person name="Madera M."/>
            <person name="Marchionni L."/>
            <person name="Matsuda H."/>
            <person name="Matsuzawa S."/>
            <person name="Miki H."/>
            <person name="Mignone F."/>
            <person name="Miyake S."/>
            <person name="Morris K."/>
            <person name="Mottagui-Tabar S."/>
            <person name="Mulder N."/>
            <person name="Nakano N."/>
            <person name="Nakauchi H."/>
            <person name="Ng P."/>
            <person name="Nilsson R."/>
            <person name="Nishiguchi S."/>
            <person name="Nishikawa S."/>
            <person name="Nori F."/>
            <person name="Ohara O."/>
            <person name="Okazaki Y."/>
            <person name="Orlando V."/>
            <person name="Pang K.C."/>
            <person name="Pavan W.J."/>
            <person name="Pavesi G."/>
            <person name="Pesole G."/>
            <person name="Petrovsky N."/>
            <person name="Piazza S."/>
            <person name="Reed J."/>
            <person name="Reid J.F."/>
            <person name="Ring B.Z."/>
            <person name="Ringwald M."/>
            <person name="Rost B."/>
            <person name="Ruan Y."/>
            <person name="Salzberg S.L."/>
            <person name="Sandelin A."/>
            <person name="Schneider C."/>
            <person name="Schoenbach C."/>
            <person name="Sekiguchi K."/>
            <person name="Semple C.A."/>
            <person name="Seno S."/>
            <person name="Sessa L."/>
            <person name="Sheng Y."/>
            <person name="Shibata Y."/>
            <person name="Shimada H."/>
            <person name="Shimada K."/>
            <person name="Silva D."/>
            <person name="Sinclair B."/>
            <person name="Sperling S."/>
            <person name="Stupka E."/>
            <person name="Sugiura K."/>
            <person name="Sultana R."/>
            <person name="Takenaka Y."/>
            <person name="Taki K."/>
            <person name="Tammoja K."/>
            <person name="Tan S.L."/>
            <person name="Tang S."/>
            <person name="Taylor M.S."/>
            <person name="Tegner J."/>
            <person name="Teichmann S.A."/>
            <person name="Ueda H.R."/>
            <person name="van Nimwegen E."/>
            <person name="Verardo R."/>
            <person name="Wei C.L."/>
            <person name="Yagi K."/>
            <person name="Yamanishi H."/>
            <person name="Zabarovsky E."/>
            <person name="Zhu S."/>
            <person name="Zimmer A."/>
            <person name="Hide W."/>
            <person name="Bult C."/>
            <person name="Grimmond S.M."/>
            <person name="Teasdale R.D."/>
            <person name="Liu E.T."/>
            <person name="Brusic V."/>
            <person name="Quackenbush J."/>
            <person name="Wahlestedt C."/>
            <person name="Mattick J.S."/>
            <person name="Hume D.A."/>
            <person name="Kai C."/>
            <person name="Sasaki D."/>
            <person name="Tomaru Y."/>
            <person name="Fukuda S."/>
            <person name="Kanamori-Katayama M."/>
            <person name="Suzuki M."/>
            <person name="Aoki J."/>
            <person name="Arakawa T."/>
            <person name="Iida J."/>
            <person name="Imamura K."/>
            <person name="Itoh M."/>
            <person name="Kato T."/>
            <person name="Kawaji H."/>
            <person name="Kawagashira N."/>
            <person name="Kawashima T."/>
            <person name="Kojima M."/>
            <person name="Kondo S."/>
            <person name="Konno H."/>
            <person name="Nakano K."/>
            <person name="Ninomiya N."/>
            <person name="Nishio T."/>
            <person name="Okada M."/>
            <person name="Plessy C."/>
            <person name="Shibata K."/>
            <person name="Shiraki T."/>
            <person name="Suzuki S."/>
            <person name="Tagami M."/>
            <person name="Waki K."/>
            <person name="Watahiki A."/>
            <person name="Okamura-Oho Y."/>
            <person name="Suzuki H."/>
            <person name="Kawai J."/>
            <person name="Hayashizaki Y."/>
        </authorList>
    </citation>
    <scope>NUCLEOTIDE SEQUENCE [LARGE SCALE MRNA]</scope>
    <source>
        <strain>C57BL/6J</strain>
    </source>
</reference>
<reference key="2">
    <citation type="journal article" date="2004" name="Genome Res.">
        <title>The status, quality, and expansion of the NIH full-length cDNA project: the Mammalian Gene Collection (MGC).</title>
        <authorList>
            <consortium name="The MGC Project Team"/>
        </authorList>
    </citation>
    <scope>NUCLEOTIDE SEQUENCE [LARGE SCALE MRNA]</scope>
    <source>
        <tissue>Eye</tissue>
    </source>
</reference>
<reference key="3">
    <citation type="journal article" date="2004" name="Mol. Cell. Proteomics">
        <title>Phosphoproteomic analysis of the developing mouse brain.</title>
        <authorList>
            <person name="Ballif B.A."/>
            <person name="Villen J."/>
            <person name="Beausoleil S.A."/>
            <person name="Schwartz D."/>
            <person name="Gygi S.P."/>
        </authorList>
    </citation>
    <scope>PHOSPHORYLATION [LARGE SCALE ANALYSIS] AT THR-470</scope>
    <scope>IDENTIFICATION BY MASS SPECTROMETRY [LARGE SCALE ANALYSIS]</scope>
    <source>
        <tissue>Embryonic brain</tissue>
    </source>
</reference>
<reference key="4">
    <citation type="journal article" date="2010" name="Cell">
        <title>A tissue-specific atlas of mouse protein phosphorylation and expression.</title>
        <authorList>
            <person name="Huttlin E.L."/>
            <person name="Jedrychowski M.P."/>
            <person name="Elias J.E."/>
            <person name="Goswami T."/>
            <person name="Rad R."/>
            <person name="Beausoleil S.A."/>
            <person name="Villen J."/>
            <person name="Haas W."/>
            <person name="Sowa M.E."/>
            <person name="Gygi S.P."/>
        </authorList>
    </citation>
    <scope>PHOSPHORYLATION [LARGE SCALE ANALYSIS] AT SER-392</scope>
    <scope>IDENTIFICATION BY MASS SPECTROMETRY [LARGE SCALE ANALYSIS]</scope>
    <source>
        <tissue>Brain</tissue>
        <tissue>Liver</tissue>
    </source>
</reference>
<dbReference type="EMBL" id="AK147323">
    <property type="protein sequence ID" value="BAE27846.1"/>
    <property type="molecule type" value="mRNA"/>
</dbReference>
<dbReference type="EMBL" id="BC017634">
    <property type="protein sequence ID" value="AAH17634.1"/>
    <property type="molecule type" value="mRNA"/>
</dbReference>
<dbReference type="EMBL" id="BC111033">
    <property type="protein sequence ID" value="AAI11034.1"/>
    <property type="molecule type" value="mRNA"/>
</dbReference>
<dbReference type="CCDS" id="CCDS40763.1"/>
<dbReference type="RefSeq" id="NP_001396866.1">
    <property type="nucleotide sequence ID" value="NM_001409937.1"/>
</dbReference>
<dbReference type="RefSeq" id="NP_663596.1">
    <property type="nucleotide sequence ID" value="NM_145621.3"/>
</dbReference>
<dbReference type="RefSeq" id="XP_006511785.1">
    <property type="nucleotide sequence ID" value="XM_006511722.2"/>
</dbReference>
<dbReference type="SMR" id="Q3UHL1"/>
<dbReference type="BioGRID" id="231689">
    <property type="interactions" value="10"/>
</dbReference>
<dbReference type="FunCoup" id="Q3UHL1">
    <property type="interactions" value="360"/>
</dbReference>
<dbReference type="IntAct" id="Q3UHL1">
    <property type="interactions" value="5"/>
</dbReference>
<dbReference type="STRING" id="10090.ENSMUSP00000040430"/>
<dbReference type="GlyGen" id="Q3UHL1">
    <property type="glycosylation" value="2 sites, 1 O-linked glycan (1 site)"/>
</dbReference>
<dbReference type="iPTMnet" id="Q3UHL1"/>
<dbReference type="PhosphoSitePlus" id="Q3UHL1"/>
<dbReference type="SwissPalm" id="Q3UHL1"/>
<dbReference type="PaxDb" id="10090-ENSMUSP00000040430"/>
<dbReference type="PeptideAtlas" id="Q3UHL1"/>
<dbReference type="ProteomicsDB" id="273907"/>
<dbReference type="Antibodypedia" id="2091">
    <property type="antibodies" value="210 antibodies from 29 providers"/>
</dbReference>
<dbReference type="DNASU" id="235604"/>
<dbReference type="Ensembl" id="ENSMUST00000035700.14">
    <property type="protein sequence ID" value="ENSMUSP00000040430.9"/>
    <property type="gene ID" value="ENSMUSG00000032936.14"/>
</dbReference>
<dbReference type="GeneID" id="235604"/>
<dbReference type="KEGG" id="mmu:235604"/>
<dbReference type="UCSC" id="uc009rnk.1">
    <property type="organism name" value="mouse"/>
</dbReference>
<dbReference type="AGR" id="MGI:2384296"/>
<dbReference type="CTD" id="79012"/>
<dbReference type="MGI" id="MGI:2384296">
    <property type="gene designation" value="Camkv"/>
</dbReference>
<dbReference type="VEuPathDB" id="HostDB:ENSMUSG00000032936"/>
<dbReference type="eggNOG" id="KOG0032">
    <property type="taxonomic scope" value="Eukaryota"/>
</dbReference>
<dbReference type="GeneTree" id="ENSGT00940000156468"/>
<dbReference type="HOGENOM" id="CLU_000288_63_0_1"/>
<dbReference type="InParanoid" id="Q3UHL1"/>
<dbReference type="OMA" id="GPATCNG"/>
<dbReference type="OrthoDB" id="40902at2759"/>
<dbReference type="PhylomeDB" id="Q3UHL1"/>
<dbReference type="TreeFam" id="TF314166"/>
<dbReference type="BioGRID-ORCS" id="235604">
    <property type="hits" value="4 hits in 79 CRISPR screens"/>
</dbReference>
<dbReference type="CD-CODE" id="CE726F99">
    <property type="entry name" value="Postsynaptic density"/>
</dbReference>
<dbReference type="ChiTaRS" id="Camkv">
    <property type="organism name" value="mouse"/>
</dbReference>
<dbReference type="PRO" id="PR:Q3UHL1"/>
<dbReference type="Proteomes" id="UP000000589">
    <property type="component" value="Chromosome 9"/>
</dbReference>
<dbReference type="RNAct" id="Q3UHL1">
    <property type="molecule type" value="protein"/>
</dbReference>
<dbReference type="Bgee" id="ENSMUSG00000032936">
    <property type="expression patterns" value="Expressed in dentate gyrus of hippocampal formation granule cell and 109 other cell types or tissues"/>
</dbReference>
<dbReference type="ExpressionAtlas" id="Q3UHL1">
    <property type="expression patterns" value="baseline and differential"/>
</dbReference>
<dbReference type="GO" id="GO:0030659">
    <property type="term" value="C:cytoplasmic vesicle membrane"/>
    <property type="evidence" value="ECO:0007669"/>
    <property type="project" value="UniProtKB-SubCell"/>
</dbReference>
<dbReference type="GO" id="GO:0098978">
    <property type="term" value="C:glutamatergic synapse"/>
    <property type="evidence" value="ECO:0000314"/>
    <property type="project" value="SynGO"/>
</dbReference>
<dbReference type="GO" id="GO:0005886">
    <property type="term" value="C:plasma membrane"/>
    <property type="evidence" value="ECO:0007669"/>
    <property type="project" value="UniProtKB-SubCell"/>
</dbReference>
<dbReference type="GO" id="GO:0005524">
    <property type="term" value="F:ATP binding"/>
    <property type="evidence" value="ECO:0007669"/>
    <property type="project" value="InterPro"/>
</dbReference>
<dbReference type="GO" id="GO:0005516">
    <property type="term" value="F:calmodulin binding"/>
    <property type="evidence" value="ECO:0007669"/>
    <property type="project" value="UniProtKB-KW"/>
</dbReference>
<dbReference type="GO" id="GO:0004672">
    <property type="term" value="F:protein kinase activity"/>
    <property type="evidence" value="ECO:0007669"/>
    <property type="project" value="InterPro"/>
</dbReference>
<dbReference type="GO" id="GO:0050804">
    <property type="term" value="P:modulation of chemical synaptic transmission"/>
    <property type="evidence" value="ECO:0000314"/>
    <property type="project" value="SynGO"/>
</dbReference>
<dbReference type="GO" id="GO:0099159">
    <property type="term" value="P:regulation of modification of postsynaptic structure"/>
    <property type="evidence" value="ECO:0000314"/>
    <property type="project" value="SynGO"/>
</dbReference>
<dbReference type="CDD" id="cd14088">
    <property type="entry name" value="STKc_CaMK_like"/>
    <property type="match status" value="1"/>
</dbReference>
<dbReference type="FunFam" id="1.10.510.10:FF:000188">
    <property type="entry name" value="CaM kinase-like vesicle-associated, like"/>
    <property type="match status" value="1"/>
</dbReference>
<dbReference type="FunFam" id="3.30.200.20:FF:000155">
    <property type="entry name" value="CaM kinase-like vesicle-associated, like"/>
    <property type="match status" value="1"/>
</dbReference>
<dbReference type="Gene3D" id="3.30.200.20">
    <property type="entry name" value="Phosphorylase Kinase, domain 1"/>
    <property type="match status" value="1"/>
</dbReference>
<dbReference type="Gene3D" id="1.10.510.10">
    <property type="entry name" value="Transferase(Phosphotransferase) domain 1"/>
    <property type="match status" value="1"/>
</dbReference>
<dbReference type="InterPro" id="IPR011009">
    <property type="entry name" value="Kinase-like_dom_sf"/>
</dbReference>
<dbReference type="InterPro" id="IPR000719">
    <property type="entry name" value="Prot_kinase_dom"/>
</dbReference>
<dbReference type="PANTHER" id="PTHR24347">
    <property type="entry name" value="SERINE/THREONINE-PROTEIN KINASE"/>
    <property type="match status" value="1"/>
</dbReference>
<dbReference type="Pfam" id="PF00069">
    <property type="entry name" value="Pkinase"/>
    <property type="match status" value="1"/>
</dbReference>
<dbReference type="SUPFAM" id="SSF56112">
    <property type="entry name" value="Protein kinase-like (PK-like)"/>
    <property type="match status" value="1"/>
</dbReference>
<dbReference type="PROSITE" id="PS50011">
    <property type="entry name" value="PROTEIN_KINASE_DOM"/>
    <property type="match status" value="1"/>
</dbReference>
<organism>
    <name type="scientific">Mus musculus</name>
    <name type="common">Mouse</name>
    <dbReference type="NCBI Taxonomy" id="10090"/>
    <lineage>
        <taxon>Eukaryota</taxon>
        <taxon>Metazoa</taxon>
        <taxon>Chordata</taxon>
        <taxon>Craniata</taxon>
        <taxon>Vertebrata</taxon>
        <taxon>Euteleostomi</taxon>
        <taxon>Mammalia</taxon>
        <taxon>Eutheria</taxon>
        <taxon>Euarchontoglires</taxon>
        <taxon>Glires</taxon>
        <taxon>Rodentia</taxon>
        <taxon>Myomorpha</taxon>
        <taxon>Muroidea</taxon>
        <taxon>Muridae</taxon>
        <taxon>Murinae</taxon>
        <taxon>Mus</taxon>
        <taxon>Mus</taxon>
    </lineage>
</organism>
<accession>Q3UHL1</accession>
<accession>Q8VD20</accession>
<feature type="chain" id="PRO_0000250095" description="CaM kinase-like vesicle-associated protein">
    <location>
        <begin position="1"/>
        <end position="512"/>
    </location>
</feature>
<feature type="domain" description="Protein kinase" evidence="3">
    <location>
        <begin position="24"/>
        <end position="286"/>
    </location>
</feature>
<feature type="region of interest" description="Disordered" evidence="4">
    <location>
        <begin position="328"/>
        <end position="347"/>
    </location>
</feature>
<feature type="region of interest" description="Disordered" evidence="4">
    <location>
        <begin position="393"/>
        <end position="512"/>
    </location>
</feature>
<feature type="compositionally biased region" description="Low complexity" evidence="4">
    <location>
        <begin position="332"/>
        <end position="347"/>
    </location>
</feature>
<feature type="compositionally biased region" description="Polar residues" evidence="4">
    <location>
        <begin position="398"/>
        <end position="439"/>
    </location>
</feature>
<feature type="compositionally biased region" description="Polar residues" evidence="4">
    <location>
        <begin position="449"/>
        <end position="460"/>
    </location>
</feature>
<feature type="compositionally biased region" description="Low complexity" evidence="4">
    <location>
        <begin position="461"/>
        <end position="478"/>
    </location>
</feature>
<feature type="modified residue" description="Phosphoserine" evidence="7">
    <location>
        <position position="392"/>
    </location>
</feature>
<feature type="modified residue" description="Phosphothreonine" evidence="2">
    <location>
        <position position="446"/>
    </location>
</feature>
<feature type="modified residue" description="Phosphothreonine" evidence="6">
    <location>
        <position position="470"/>
    </location>
</feature>
<feature type="sequence conflict" description="In Ref. 1; BAE27846." evidence="5" ref="1">
    <original>D</original>
    <variation>G</variation>
    <location>
        <position position="479"/>
    </location>
</feature>
<gene>
    <name type="primary">Camkv</name>
</gene>